<comment type="function">
    <text evidence="1">Catalyzes the NADPH-dependent reduction of L-glutamate 5-phosphate into L-glutamate 5-semialdehyde and phosphate. The product spontaneously undergoes cyclization to form 1-pyrroline-5-carboxylate.</text>
</comment>
<comment type="catalytic activity">
    <reaction evidence="1">
        <text>L-glutamate 5-semialdehyde + phosphate + NADP(+) = L-glutamyl 5-phosphate + NADPH + H(+)</text>
        <dbReference type="Rhea" id="RHEA:19541"/>
        <dbReference type="ChEBI" id="CHEBI:15378"/>
        <dbReference type="ChEBI" id="CHEBI:43474"/>
        <dbReference type="ChEBI" id="CHEBI:57783"/>
        <dbReference type="ChEBI" id="CHEBI:58066"/>
        <dbReference type="ChEBI" id="CHEBI:58274"/>
        <dbReference type="ChEBI" id="CHEBI:58349"/>
        <dbReference type="EC" id="1.2.1.41"/>
    </reaction>
</comment>
<comment type="pathway">
    <text evidence="1">Amino-acid biosynthesis; L-proline biosynthesis; L-glutamate 5-semialdehyde from L-glutamate: step 2/2.</text>
</comment>
<comment type="subcellular location">
    <subcellularLocation>
        <location evidence="1">Cytoplasm</location>
    </subcellularLocation>
</comment>
<comment type="similarity">
    <text evidence="1">Belongs to the gamma-glutamyl phosphate reductase family.</text>
</comment>
<organism>
    <name type="scientific">Desulfatibacillum aliphaticivorans</name>
    <dbReference type="NCBI Taxonomy" id="218208"/>
    <lineage>
        <taxon>Bacteria</taxon>
        <taxon>Pseudomonadati</taxon>
        <taxon>Thermodesulfobacteriota</taxon>
        <taxon>Desulfobacteria</taxon>
        <taxon>Desulfobacterales</taxon>
        <taxon>Desulfatibacillaceae</taxon>
        <taxon>Desulfatibacillum</taxon>
    </lineage>
</organism>
<accession>B8FM70</accession>
<feature type="chain" id="PRO_1000193594" description="Gamma-glutamyl phosphate reductase">
    <location>
        <begin position="1"/>
        <end position="418"/>
    </location>
</feature>
<proteinExistence type="inferred from homology"/>
<sequence length="418" mass="44787">MSVNEIILDMAKAARAASREIGKCSGQVKDKVLTDIAALLKEEASFLYQENAKDLEAAKESGLSSAMIDRLTIKEATIESMAQGLVEVAAMADPVGSMVKMWQRPNGLSVGKMRIPLGVVCMIYESRPNVTIDAAGLCLKAGNAVVLRGGSEAIHSNRALGQVIAKALAKNGLPETVVQLVPMTDREAVKELLAQEEYIDLVIPRGGEGLIRFVVANSSIPVLKHYKGVCHVYVDEGADHGMAVNICQNGKVHRPGVCNAVETLLVNEAEAAAFLPKVAEVLGKDGVEFRGCPKTCAILKDAKPAQEEDWPAEFLDLILAVKVVKDMDEAMDHIAKYGSLHTETIVTDNYTRAKRFCREVDASAVMVNASTRFNDGGQLGLGAEIGISTSKLHAFGPMGVEELTATKFVVEGQGQIRS</sequence>
<dbReference type="EC" id="1.2.1.41" evidence="1"/>
<dbReference type="EMBL" id="CP001322">
    <property type="protein sequence ID" value="ACL05803.1"/>
    <property type="molecule type" value="Genomic_DNA"/>
</dbReference>
<dbReference type="RefSeq" id="WP_015948851.1">
    <property type="nucleotide sequence ID" value="NC_011768.1"/>
</dbReference>
<dbReference type="SMR" id="B8FM70"/>
<dbReference type="KEGG" id="dal:Dalk_4118"/>
<dbReference type="eggNOG" id="COG0014">
    <property type="taxonomic scope" value="Bacteria"/>
</dbReference>
<dbReference type="HOGENOM" id="CLU_030231_0_0_7"/>
<dbReference type="UniPathway" id="UPA00098">
    <property type="reaction ID" value="UER00360"/>
</dbReference>
<dbReference type="Proteomes" id="UP000000739">
    <property type="component" value="Chromosome"/>
</dbReference>
<dbReference type="GO" id="GO:0005737">
    <property type="term" value="C:cytoplasm"/>
    <property type="evidence" value="ECO:0007669"/>
    <property type="project" value="UniProtKB-SubCell"/>
</dbReference>
<dbReference type="GO" id="GO:0004350">
    <property type="term" value="F:glutamate-5-semialdehyde dehydrogenase activity"/>
    <property type="evidence" value="ECO:0007669"/>
    <property type="project" value="UniProtKB-UniRule"/>
</dbReference>
<dbReference type="GO" id="GO:0050661">
    <property type="term" value="F:NADP binding"/>
    <property type="evidence" value="ECO:0007669"/>
    <property type="project" value="InterPro"/>
</dbReference>
<dbReference type="GO" id="GO:0055129">
    <property type="term" value="P:L-proline biosynthetic process"/>
    <property type="evidence" value="ECO:0007669"/>
    <property type="project" value="UniProtKB-UniRule"/>
</dbReference>
<dbReference type="CDD" id="cd07079">
    <property type="entry name" value="ALDH_F18-19_ProA-GPR"/>
    <property type="match status" value="1"/>
</dbReference>
<dbReference type="FunFam" id="3.40.309.10:FF:000006">
    <property type="entry name" value="Gamma-glutamyl phosphate reductase"/>
    <property type="match status" value="1"/>
</dbReference>
<dbReference type="Gene3D" id="3.40.605.10">
    <property type="entry name" value="Aldehyde Dehydrogenase, Chain A, domain 1"/>
    <property type="match status" value="1"/>
</dbReference>
<dbReference type="Gene3D" id="3.40.309.10">
    <property type="entry name" value="Aldehyde Dehydrogenase, Chain A, domain 2"/>
    <property type="match status" value="1"/>
</dbReference>
<dbReference type="HAMAP" id="MF_00412">
    <property type="entry name" value="ProA"/>
    <property type="match status" value="1"/>
</dbReference>
<dbReference type="InterPro" id="IPR016161">
    <property type="entry name" value="Ald_DH/histidinol_DH"/>
</dbReference>
<dbReference type="InterPro" id="IPR016163">
    <property type="entry name" value="Ald_DH_C"/>
</dbReference>
<dbReference type="InterPro" id="IPR016162">
    <property type="entry name" value="Ald_DH_N"/>
</dbReference>
<dbReference type="InterPro" id="IPR015590">
    <property type="entry name" value="Aldehyde_DH_dom"/>
</dbReference>
<dbReference type="InterPro" id="IPR020593">
    <property type="entry name" value="G-glutamylP_reductase_CS"/>
</dbReference>
<dbReference type="InterPro" id="IPR012134">
    <property type="entry name" value="Glu-5-SA_DH"/>
</dbReference>
<dbReference type="InterPro" id="IPR000965">
    <property type="entry name" value="GPR_dom"/>
</dbReference>
<dbReference type="NCBIfam" id="NF001221">
    <property type="entry name" value="PRK00197.1"/>
    <property type="match status" value="1"/>
</dbReference>
<dbReference type="NCBIfam" id="TIGR00407">
    <property type="entry name" value="proA"/>
    <property type="match status" value="1"/>
</dbReference>
<dbReference type="PANTHER" id="PTHR11063:SF8">
    <property type="entry name" value="DELTA-1-PYRROLINE-5-CARBOXYLATE SYNTHASE"/>
    <property type="match status" value="1"/>
</dbReference>
<dbReference type="PANTHER" id="PTHR11063">
    <property type="entry name" value="GLUTAMATE SEMIALDEHYDE DEHYDROGENASE"/>
    <property type="match status" value="1"/>
</dbReference>
<dbReference type="Pfam" id="PF00171">
    <property type="entry name" value="Aldedh"/>
    <property type="match status" value="1"/>
</dbReference>
<dbReference type="PIRSF" id="PIRSF000151">
    <property type="entry name" value="GPR"/>
    <property type="match status" value="1"/>
</dbReference>
<dbReference type="SUPFAM" id="SSF53720">
    <property type="entry name" value="ALDH-like"/>
    <property type="match status" value="1"/>
</dbReference>
<dbReference type="PROSITE" id="PS01223">
    <property type="entry name" value="PROA"/>
    <property type="match status" value="1"/>
</dbReference>
<keyword id="KW-0028">Amino-acid biosynthesis</keyword>
<keyword id="KW-0963">Cytoplasm</keyword>
<keyword id="KW-0521">NADP</keyword>
<keyword id="KW-0560">Oxidoreductase</keyword>
<keyword id="KW-0641">Proline biosynthesis</keyword>
<keyword id="KW-1185">Reference proteome</keyword>
<name>PROA_DESAL</name>
<gene>
    <name evidence="1" type="primary">proA</name>
    <name type="ordered locus">Dalk_4118</name>
</gene>
<reference key="1">
    <citation type="journal article" date="2012" name="Environ. Microbiol.">
        <title>The genome sequence of Desulfatibacillum alkenivorans AK-01: a blueprint for anaerobic alkane oxidation.</title>
        <authorList>
            <person name="Callaghan A.V."/>
            <person name="Morris B.E."/>
            <person name="Pereira I.A."/>
            <person name="McInerney M.J."/>
            <person name="Austin R.N."/>
            <person name="Groves J.T."/>
            <person name="Kukor J.J."/>
            <person name="Suflita J.M."/>
            <person name="Young L.Y."/>
            <person name="Zylstra G.J."/>
            <person name="Wawrik B."/>
        </authorList>
    </citation>
    <scope>NUCLEOTIDE SEQUENCE [LARGE SCALE GENOMIC DNA]</scope>
    <source>
        <strain>AK-01</strain>
    </source>
</reference>
<protein>
    <recommendedName>
        <fullName evidence="1">Gamma-glutamyl phosphate reductase</fullName>
        <shortName evidence="1">GPR</shortName>
        <ecNumber evidence="1">1.2.1.41</ecNumber>
    </recommendedName>
    <alternativeName>
        <fullName evidence="1">Glutamate-5-semialdehyde dehydrogenase</fullName>
    </alternativeName>
    <alternativeName>
        <fullName evidence="1">Glutamyl-gamma-semialdehyde dehydrogenase</fullName>
        <shortName evidence="1">GSA dehydrogenase</shortName>
    </alternativeName>
</protein>
<evidence type="ECO:0000255" key="1">
    <source>
        <dbReference type="HAMAP-Rule" id="MF_00412"/>
    </source>
</evidence>